<name>NDK_CITBB</name>
<evidence type="ECO:0000255" key="1">
    <source>
        <dbReference type="HAMAP-Rule" id="MF_00451"/>
    </source>
</evidence>
<protein>
    <recommendedName>
        <fullName evidence="1">Nucleoside diphosphate kinase</fullName>
        <shortName evidence="1">NDK</shortName>
        <shortName evidence="1">NDP kinase</shortName>
        <ecNumber evidence="1">2.7.4.6</ecNumber>
    </recommendedName>
    <alternativeName>
        <fullName evidence="1">Nucleoside-2-P kinase</fullName>
    </alternativeName>
</protein>
<organism>
    <name type="scientific">Citrifermentans bemidjiense (strain ATCC BAA-1014 / DSM 16622 / JCM 12645 / Bem)</name>
    <name type="common">Geobacter bemidjiensis</name>
    <dbReference type="NCBI Taxonomy" id="404380"/>
    <lineage>
        <taxon>Bacteria</taxon>
        <taxon>Pseudomonadati</taxon>
        <taxon>Thermodesulfobacteriota</taxon>
        <taxon>Desulfuromonadia</taxon>
        <taxon>Geobacterales</taxon>
        <taxon>Geobacteraceae</taxon>
        <taxon>Citrifermentans</taxon>
    </lineage>
</organism>
<dbReference type="EC" id="2.7.4.6" evidence="1"/>
<dbReference type="EMBL" id="CP001124">
    <property type="protein sequence ID" value="ACH38672.1"/>
    <property type="molecule type" value="Genomic_DNA"/>
</dbReference>
<dbReference type="RefSeq" id="WP_012530089.1">
    <property type="nucleotide sequence ID" value="NC_011146.1"/>
</dbReference>
<dbReference type="SMR" id="B5E9D0"/>
<dbReference type="STRING" id="404380.Gbem_1654"/>
<dbReference type="KEGG" id="gbm:Gbem_1654"/>
<dbReference type="eggNOG" id="COG0105">
    <property type="taxonomic scope" value="Bacteria"/>
</dbReference>
<dbReference type="HOGENOM" id="CLU_060216_8_1_7"/>
<dbReference type="OrthoDB" id="9801161at2"/>
<dbReference type="Proteomes" id="UP000008825">
    <property type="component" value="Chromosome"/>
</dbReference>
<dbReference type="GO" id="GO:0005737">
    <property type="term" value="C:cytoplasm"/>
    <property type="evidence" value="ECO:0007669"/>
    <property type="project" value="UniProtKB-SubCell"/>
</dbReference>
<dbReference type="GO" id="GO:0005524">
    <property type="term" value="F:ATP binding"/>
    <property type="evidence" value="ECO:0007669"/>
    <property type="project" value="UniProtKB-UniRule"/>
</dbReference>
<dbReference type="GO" id="GO:0046872">
    <property type="term" value="F:metal ion binding"/>
    <property type="evidence" value="ECO:0007669"/>
    <property type="project" value="UniProtKB-KW"/>
</dbReference>
<dbReference type="GO" id="GO:0004550">
    <property type="term" value="F:nucleoside diphosphate kinase activity"/>
    <property type="evidence" value="ECO:0007669"/>
    <property type="project" value="UniProtKB-UniRule"/>
</dbReference>
<dbReference type="GO" id="GO:0006241">
    <property type="term" value="P:CTP biosynthetic process"/>
    <property type="evidence" value="ECO:0007669"/>
    <property type="project" value="UniProtKB-UniRule"/>
</dbReference>
<dbReference type="GO" id="GO:0006183">
    <property type="term" value="P:GTP biosynthetic process"/>
    <property type="evidence" value="ECO:0007669"/>
    <property type="project" value="UniProtKB-UniRule"/>
</dbReference>
<dbReference type="GO" id="GO:0006228">
    <property type="term" value="P:UTP biosynthetic process"/>
    <property type="evidence" value="ECO:0007669"/>
    <property type="project" value="UniProtKB-UniRule"/>
</dbReference>
<dbReference type="CDD" id="cd04413">
    <property type="entry name" value="NDPk_I"/>
    <property type="match status" value="1"/>
</dbReference>
<dbReference type="FunFam" id="3.30.70.141:FF:000003">
    <property type="entry name" value="Nucleoside diphosphate kinase"/>
    <property type="match status" value="1"/>
</dbReference>
<dbReference type="Gene3D" id="3.30.70.141">
    <property type="entry name" value="Nucleoside diphosphate kinase-like domain"/>
    <property type="match status" value="1"/>
</dbReference>
<dbReference type="HAMAP" id="MF_00451">
    <property type="entry name" value="NDP_kinase"/>
    <property type="match status" value="1"/>
</dbReference>
<dbReference type="InterPro" id="IPR034907">
    <property type="entry name" value="NDK-like_dom"/>
</dbReference>
<dbReference type="InterPro" id="IPR036850">
    <property type="entry name" value="NDK-like_dom_sf"/>
</dbReference>
<dbReference type="InterPro" id="IPR001564">
    <property type="entry name" value="Nucleoside_diP_kinase"/>
</dbReference>
<dbReference type="InterPro" id="IPR023005">
    <property type="entry name" value="Nucleoside_diP_kinase_AS"/>
</dbReference>
<dbReference type="NCBIfam" id="NF001908">
    <property type="entry name" value="PRK00668.1"/>
    <property type="match status" value="1"/>
</dbReference>
<dbReference type="PANTHER" id="PTHR46161">
    <property type="entry name" value="NUCLEOSIDE DIPHOSPHATE KINASE"/>
    <property type="match status" value="1"/>
</dbReference>
<dbReference type="PANTHER" id="PTHR46161:SF3">
    <property type="entry name" value="NUCLEOSIDE DIPHOSPHATE KINASE DDB_G0292928-RELATED"/>
    <property type="match status" value="1"/>
</dbReference>
<dbReference type="Pfam" id="PF00334">
    <property type="entry name" value="NDK"/>
    <property type="match status" value="1"/>
</dbReference>
<dbReference type="PRINTS" id="PR01243">
    <property type="entry name" value="NUCDPKINASE"/>
</dbReference>
<dbReference type="SMART" id="SM00562">
    <property type="entry name" value="NDK"/>
    <property type="match status" value="1"/>
</dbReference>
<dbReference type="SUPFAM" id="SSF54919">
    <property type="entry name" value="Nucleoside diphosphate kinase, NDK"/>
    <property type="match status" value="1"/>
</dbReference>
<dbReference type="PROSITE" id="PS00469">
    <property type="entry name" value="NDPK"/>
    <property type="match status" value="1"/>
</dbReference>
<dbReference type="PROSITE" id="PS51374">
    <property type="entry name" value="NDPK_LIKE"/>
    <property type="match status" value="1"/>
</dbReference>
<comment type="function">
    <text evidence="1">Major role in the synthesis of nucleoside triphosphates other than ATP. The ATP gamma phosphate is transferred to the NDP beta phosphate via a ping-pong mechanism, using a phosphorylated active-site intermediate.</text>
</comment>
<comment type="catalytic activity">
    <reaction evidence="1">
        <text>a 2'-deoxyribonucleoside 5'-diphosphate + ATP = a 2'-deoxyribonucleoside 5'-triphosphate + ADP</text>
        <dbReference type="Rhea" id="RHEA:44640"/>
        <dbReference type="ChEBI" id="CHEBI:30616"/>
        <dbReference type="ChEBI" id="CHEBI:61560"/>
        <dbReference type="ChEBI" id="CHEBI:73316"/>
        <dbReference type="ChEBI" id="CHEBI:456216"/>
        <dbReference type="EC" id="2.7.4.6"/>
    </reaction>
</comment>
<comment type="catalytic activity">
    <reaction evidence="1">
        <text>a ribonucleoside 5'-diphosphate + ATP = a ribonucleoside 5'-triphosphate + ADP</text>
        <dbReference type="Rhea" id="RHEA:18113"/>
        <dbReference type="ChEBI" id="CHEBI:30616"/>
        <dbReference type="ChEBI" id="CHEBI:57930"/>
        <dbReference type="ChEBI" id="CHEBI:61557"/>
        <dbReference type="ChEBI" id="CHEBI:456216"/>
        <dbReference type="EC" id="2.7.4.6"/>
    </reaction>
</comment>
<comment type="cofactor">
    <cofactor evidence="1">
        <name>Mg(2+)</name>
        <dbReference type="ChEBI" id="CHEBI:18420"/>
    </cofactor>
</comment>
<comment type="subunit">
    <text evidence="1">Homotetramer.</text>
</comment>
<comment type="subcellular location">
    <subcellularLocation>
        <location evidence="1">Cytoplasm</location>
    </subcellularLocation>
</comment>
<comment type="similarity">
    <text evidence="1">Belongs to the NDK family.</text>
</comment>
<feature type="chain" id="PRO_1000192255" description="Nucleoside diphosphate kinase">
    <location>
        <begin position="1"/>
        <end position="137"/>
    </location>
</feature>
<feature type="active site" description="Pros-phosphohistidine intermediate" evidence="1">
    <location>
        <position position="115"/>
    </location>
</feature>
<feature type="binding site" evidence="1">
    <location>
        <position position="9"/>
    </location>
    <ligand>
        <name>ATP</name>
        <dbReference type="ChEBI" id="CHEBI:30616"/>
    </ligand>
</feature>
<feature type="binding site" evidence="1">
    <location>
        <position position="57"/>
    </location>
    <ligand>
        <name>ATP</name>
        <dbReference type="ChEBI" id="CHEBI:30616"/>
    </ligand>
</feature>
<feature type="binding site" evidence="1">
    <location>
        <position position="85"/>
    </location>
    <ligand>
        <name>ATP</name>
        <dbReference type="ChEBI" id="CHEBI:30616"/>
    </ligand>
</feature>
<feature type="binding site" evidence="1">
    <location>
        <position position="91"/>
    </location>
    <ligand>
        <name>ATP</name>
        <dbReference type="ChEBI" id="CHEBI:30616"/>
    </ligand>
</feature>
<feature type="binding site" evidence="1">
    <location>
        <position position="102"/>
    </location>
    <ligand>
        <name>ATP</name>
        <dbReference type="ChEBI" id="CHEBI:30616"/>
    </ligand>
</feature>
<feature type="binding site" evidence="1">
    <location>
        <position position="112"/>
    </location>
    <ligand>
        <name>ATP</name>
        <dbReference type="ChEBI" id="CHEBI:30616"/>
    </ligand>
</feature>
<gene>
    <name evidence="1" type="primary">ndk</name>
    <name type="ordered locus">Gbem_1654</name>
</gene>
<reference key="1">
    <citation type="submission" date="2008-07" db="EMBL/GenBank/DDBJ databases">
        <title>Complete sequence of Geobacter bemidjiensis BEM.</title>
        <authorList>
            <consortium name="US DOE Joint Genome Institute"/>
            <person name="Lucas S."/>
            <person name="Copeland A."/>
            <person name="Lapidus A."/>
            <person name="Glavina del Rio T."/>
            <person name="Dalin E."/>
            <person name="Tice H."/>
            <person name="Bruce D."/>
            <person name="Goodwin L."/>
            <person name="Pitluck S."/>
            <person name="Kiss H."/>
            <person name="Brettin T."/>
            <person name="Detter J.C."/>
            <person name="Han C."/>
            <person name="Kuske C.R."/>
            <person name="Schmutz J."/>
            <person name="Larimer F."/>
            <person name="Land M."/>
            <person name="Hauser L."/>
            <person name="Kyrpides N."/>
            <person name="Lykidis A."/>
            <person name="Lovley D."/>
            <person name="Richardson P."/>
        </authorList>
    </citation>
    <scope>NUCLEOTIDE SEQUENCE [LARGE SCALE GENOMIC DNA]</scope>
    <source>
        <strain>ATCC BAA-1014 / DSM 16622 / JCM 12645 / Bem</strain>
    </source>
</reference>
<keyword id="KW-0067">ATP-binding</keyword>
<keyword id="KW-0963">Cytoplasm</keyword>
<keyword id="KW-0418">Kinase</keyword>
<keyword id="KW-0460">Magnesium</keyword>
<keyword id="KW-0479">Metal-binding</keyword>
<keyword id="KW-0546">Nucleotide metabolism</keyword>
<keyword id="KW-0547">Nucleotide-binding</keyword>
<keyword id="KW-0597">Phosphoprotein</keyword>
<keyword id="KW-1185">Reference proteome</keyword>
<keyword id="KW-0808">Transferase</keyword>
<sequence length="137" mass="15145">MERTFAIIKPDAVERNVTGKVLAMIEEGGFKIVGMKKIRLSKCQAEGFYYVHKERPFFGDLCAFMSRGPVIALVLEKENAIADWRGLMGATNPANAEAGTIRKALGVSIEENTVHGSDSPESASYEIPYFFNQLELV</sequence>
<accession>B5E9D0</accession>
<proteinExistence type="inferred from homology"/>